<organism>
    <name type="scientific">Rickettsia akari (strain Hartford)</name>
    <dbReference type="NCBI Taxonomy" id="293614"/>
    <lineage>
        <taxon>Bacteria</taxon>
        <taxon>Pseudomonadati</taxon>
        <taxon>Pseudomonadota</taxon>
        <taxon>Alphaproteobacteria</taxon>
        <taxon>Rickettsiales</taxon>
        <taxon>Rickettsiaceae</taxon>
        <taxon>Rickettsieae</taxon>
        <taxon>Rickettsia</taxon>
        <taxon>spotted fever group</taxon>
    </lineage>
</organism>
<name>UVRB_RICAH</name>
<proteinExistence type="inferred from homology"/>
<evidence type="ECO:0000255" key="1">
    <source>
        <dbReference type="HAMAP-Rule" id="MF_00204"/>
    </source>
</evidence>
<reference key="1">
    <citation type="submission" date="2007-09" db="EMBL/GenBank/DDBJ databases">
        <title>Complete genome sequence of Rickettsia akari.</title>
        <authorList>
            <person name="Madan A."/>
            <person name="Fahey J."/>
            <person name="Helton E."/>
            <person name="Ketteman M."/>
            <person name="Madan A."/>
            <person name="Rodrigues S."/>
            <person name="Sanchez A."/>
            <person name="Whiting M."/>
            <person name="Dasch G."/>
            <person name="Eremeeva M."/>
        </authorList>
    </citation>
    <scope>NUCLEOTIDE SEQUENCE [LARGE SCALE GENOMIC DNA]</scope>
    <source>
        <strain>Hartford</strain>
    </source>
</reference>
<comment type="function">
    <text evidence="1">The UvrABC repair system catalyzes the recognition and processing of DNA lesions. A damage recognition complex composed of 2 UvrA and 2 UvrB subunits scans DNA for abnormalities. Upon binding of the UvrA(2)B(2) complex to a putative damaged site, the DNA wraps around one UvrB monomer. DNA wrap is dependent on ATP binding by UvrB and probably causes local melting of the DNA helix, facilitating insertion of UvrB beta-hairpin between the DNA strands. Then UvrB probes one DNA strand for the presence of a lesion. If a lesion is found the UvrA subunits dissociate and the UvrB-DNA preincision complex is formed. This complex is subsequently bound by UvrC and the second UvrB is released. If no lesion is found, the DNA wraps around the other UvrB subunit that will check the other stand for damage.</text>
</comment>
<comment type="subunit">
    <text evidence="1">Forms a heterotetramer with UvrA during the search for lesions. Interacts with UvrC in an incision complex.</text>
</comment>
<comment type="subcellular location">
    <subcellularLocation>
        <location evidence="1">Cytoplasm</location>
    </subcellularLocation>
</comment>
<comment type="domain">
    <text evidence="1">The beta-hairpin motif is involved in DNA binding.</text>
</comment>
<comment type="similarity">
    <text evidence="1">Belongs to the UvrB family.</text>
</comment>
<gene>
    <name evidence="1" type="primary">uvrB</name>
    <name type="ordered locus">A1C_01490</name>
</gene>
<keyword id="KW-0067">ATP-binding</keyword>
<keyword id="KW-0963">Cytoplasm</keyword>
<keyword id="KW-0227">DNA damage</keyword>
<keyword id="KW-0228">DNA excision</keyword>
<keyword id="KW-0234">DNA repair</keyword>
<keyword id="KW-0267">Excision nuclease</keyword>
<keyword id="KW-0347">Helicase</keyword>
<keyword id="KW-0378">Hydrolase</keyword>
<keyword id="KW-0547">Nucleotide-binding</keyword>
<keyword id="KW-0742">SOS response</keyword>
<accession>A8GMJ1</accession>
<dbReference type="EMBL" id="CP000847">
    <property type="protein sequence ID" value="ABV74616.1"/>
    <property type="molecule type" value="Genomic_DNA"/>
</dbReference>
<dbReference type="RefSeq" id="WP_012149250.1">
    <property type="nucleotide sequence ID" value="NC_009881.1"/>
</dbReference>
<dbReference type="SMR" id="A8GMJ1"/>
<dbReference type="STRING" id="293614.A1C_01490"/>
<dbReference type="KEGG" id="rak:A1C_01490"/>
<dbReference type="eggNOG" id="COG0556">
    <property type="taxonomic scope" value="Bacteria"/>
</dbReference>
<dbReference type="HOGENOM" id="CLU_009621_2_1_5"/>
<dbReference type="Proteomes" id="UP000006830">
    <property type="component" value="Chromosome"/>
</dbReference>
<dbReference type="GO" id="GO:0005737">
    <property type="term" value="C:cytoplasm"/>
    <property type="evidence" value="ECO:0007669"/>
    <property type="project" value="UniProtKB-SubCell"/>
</dbReference>
<dbReference type="GO" id="GO:0009380">
    <property type="term" value="C:excinuclease repair complex"/>
    <property type="evidence" value="ECO:0007669"/>
    <property type="project" value="InterPro"/>
</dbReference>
<dbReference type="GO" id="GO:0005524">
    <property type="term" value="F:ATP binding"/>
    <property type="evidence" value="ECO:0007669"/>
    <property type="project" value="UniProtKB-UniRule"/>
</dbReference>
<dbReference type="GO" id="GO:0016887">
    <property type="term" value="F:ATP hydrolysis activity"/>
    <property type="evidence" value="ECO:0007669"/>
    <property type="project" value="InterPro"/>
</dbReference>
<dbReference type="GO" id="GO:0003677">
    <property type="term" value="F:DNA binding"/>
    <property type="evidence" value="ECO:0007669"/>
    <property type="project" value="UniProtKB-UniRule"/>
</dbReference>
<dbReference type="GO" id="GO:0009381">
    <property type="term" value="F:excinuclease ABC activity"/>
    <property type="evidence" value="ECO:0007669"/>
    <property type="project" value="UniProtKB-UniRule"/>
</dbReference>
<dbReference type="GO" id="GO:0004386">
    <property type="term" value="F:helicase activity"/>
    <property type="evidence" value="ECO:0007669"/>
    <property type="project" value="UniProtKB-KW"/>
</dbReference>
<dbReference type="GO" id="GO:0006289">
    <property type="term" value="P:nucleotide-excision repair"/>
    <property type="evidence" value="ECO:0007669"/>
    <property type="project" value="UniProtKB-UniRule"/>
</dbReference>
<dbReference type="GO" id="GO:0009432">
    <property type="term" value="P:SOS response"/>
    <property type="evidence" value="ECO:0007669"/>
    <property type="project" value="UniProtKB-UniRule"/>
</dbReference>
<dbReference type="CDD" id="cd17916">
    <property type="entry name" value="DEXHc_UvrB"/>
    <property type="match status" value="1"/>
</dbReference>
<dbReference type="CDD" id="cd18790">
    <property type="entry name" value="SF2_C_UvrB"/>
    <property type="match status" value="1"/>
</dbReference>
<dbReference type="Gene3D" id="3.40.50.300">
    <property type="entry name" value="P-loop containing nucleotide triphosphate hydrolases"/>
    <property type="match status" value="3"/>
</dbReference>
<dbReference type="Gene3D" id="4.10.860.10">
    <property type="entry name" value="UVR domain"/>
    <property type="match status" value="1"/>
</dbReference>
<dbReference type="HAMAP" id="MF_00204">
    <property type="entry name" value="UvrB"/>
    <property type="match status" value="1"/>
</dbReference>
<dbReference type="InterPro" id="IPR006935">
    <property type="entry name" value="Helicase/UvrB_N"/>
</dbReference>
<dbReference type="InterPro" id="IPR014001">
    <property type="entry name" value="Helicase_ATP-bd"/>
</dbReference>
<dbReference type="InterPro" id="IPR001650">
    <property type="entry name" value="Helicase_C-like"/>
</dbReference>
<dbReference type="InterPro" id="IPR027417">
    <property type="entry name" value="P-loop_NTPase"/>
</dbReference>
<dbReference type="InterPro" id="IPR001943">
    <property type="entry name" value="UVR_dom"/>
</dbReference>
<dbReference type="InterPro" id="IPR036876">
    <property type="entry name" value="UVR_dom_sf"/>
</dbReference>
<dbReference type="InterPro" id="IPR004807">
    <property type="entry name" value="UvrB"/>
</dbReference>
<dbReference type="InterPro" id="IPR041471">
    <property type="entry name" value="UvrB_inter"/>
</dbReference>
<dbReference type="InterPro" id="IPR024759">
    <property type="entry name" value="UvrB_YAD/RRR_dom"/>
</dbReference>
<dbReference type="NCBIfam" id="NF003673">
    <property type="entry name" value="PRK05298.1"/>
    <property type="match status" value="1"/>
</dbReference>
<dbReference type="NCBIfam" id="TIGR00631">
    <property type="entry name" value="uvrb"/>
    <property type="match status" value="1"/>
</dbReference>
<dbReference type="PANTHER" id="PTHR24029">
    <property type="entry name" value="UVRABC SYSTEM PROTEIN B"/>
    <property type="match status" value="1"/>
</dbReference>
<dbReference type="PANTHER" id="PTHR24029:SF0">
    <property type="entry name" value="UVRABC SYSTEM PROTEIN B"/>
    <property type="match status" value="1"/>
</dbReference>
<dbReference type="Pfam" id="PF00271">
    <property type="entry name" value="Helicase_C"/>
    <property type="match status" value="1"/>
</dbReference>
<dbReference type="Pfam" id="PF04851">
    <property type="entry name" value="ResIII"/>
    <property type="match status" value="1"/>
</dbReference>
<dbReference type="Pfam" id="PF02151">
    <property type="entry name" value="UVR"/>
    <property type="match status" value="1"/>
</dbReference>
<dbReference type="Pfam" id="PF12344">
    <property type="entry name" value="UvrB"/>
    <property type="match status" value="1"/>
</dbReference>
<dbReference type="Pfam" id="PF17757">
    <property type="entry name" value="UvrB_inter"/>
    <property type="match status" value="1"/>
</dbReference>
<dbReference type="SMART" id="SM00487">
    <property type="entry name" value="DEXDc"/>
    <property type="match status" value="1"/>
</dbReference>
<dbReference type="SMART" id="SM00490">
    <property type="entry name" value="HELICc"/>
    <property type="match status" value="1"/>
</dbReference>
<dbReference type="SUPFAM" id="SSF46600">
    <property type="entry name" value="C-terminal UvrC-binding domain of UvrB"/>
    <property type="match status" value="1"/>
</dbReference>
<dbReference type="SUPFAM" id="SSF52540">
    <property type="entry name" value="P-loop containing nucleoside triphosphate hydrolases"/>
    <property type="match status" value="2"/>
</dbReference>
<dbReference type="PROSITE" id="PS51192">
    <property type="entry name" value="HELICASE_ATP_BIND_1"/>
    <property type="match status" value="1"/>
</dbReference>
<dbReference type="PROSITE" id="PS51194">
    <property type="entry name" value="HELICASE_CTER"/>
    <property type="match status" value="1"/>
</dbReference>
<dbReference type="PROSITE" id="PS50151">
    <property type="entry name" value="UVR"/>
    <property type="match status" value="1"/>
</dbReference>
<sequence>MNHFSLISEYKPAGDQPKAIDEIIAGLNSKKRSQMLLGITGSGKTFTMANIIERTNRPTLIMAHNKTLAAQIYSEMKSIFPKNAVEYFVSYYDYYQPEAYIARTDTFIEKDSSINEHIDLMRHSATRSLLERRDVIVVASVSCIYGLGSPDLYYQMTVNLEPGKSYPRDKLLNDLINLQYKRNDMGFERGCFRVKGDNIDIFPSHYSDKAWRLSFFSNELEYIHEFDPLTGEKLAKLDKAIVFGHSHFVMPQDTVNNAISGIEEELQKRLEFLKSQNKLLETQRLNQRTQYDLEMLTETGSCKGVENYSRFFTGRNAGEPPPTLFEYLPKDALLFVDESHVSVPQIKAMYNSDRARKEVLVEHGFRLPSALDNRPLKFEEWEKFRPQTVFVSATPGPFELEETGGTVVELIIRPTGLLDPECIIKPATKQVEDLISEIQATVAKGLRVLVTTLTKKMAEDLTAYLQELKYKTSYLHSNVHTLERIEILQDLRQGTIDILVGINLLREGLDIPECGLVAILDADKEGFLRSEVSLIQTIGRAARNSEGRVILYADKMTKSIDKALSETLRRRQIQQEYNEKHGIIPKTINRAIHALATLERVDSKCDTKQAHTLFDNTAKLKANINKLNKEMLKAASNLEFEQAAKLRDQLKTLEAAARELS</sequence>
<feature type="chain" id="PRO_1000077913" description="UvrABC system protein B">
    <location>
        <begin position="1"/>
        <end position="661"/>
    </location>
</feature>
<feature type="domain" description="Helicase ATP-binding" evidence="1">
    <location>
        <begin position="25"/>
        <end position="182"/>
    </location>
</feature>
<feature type="domain" description="Helicase C-terminal" evidence="1">
    <location>
        <begin position="430"/>
        <end position="592"/>
    </location>
</feature>
<feature type="domain" description="UVR" evidence="1">
    <location>
        <begin position="621"/>
        <end position="656"/>
    </location>
</feature>
<feature type="short sequence motif" description="Beta-hairpin">
    <location>
        <begin position="91"/>
        <end position="114"/>
    </location>
</feature>
<feature type="binding site" evidence="1">
    <location>
        <begin position="38"/>
        <end position="45"/>
    </location>
    <ligand>
        <name>ATP</name>
        <dbReference type="ChEBI" id="CHEBI:30616"/>
    </ligand>
</feature>
<protein>
    <recommendedName>
        <fullName evidence="1">UvrABC system protein B</fullName>
        <shortName evidence="1">Protein UvrB</shortName>
    </recommendedName>
    <alternativeName>
        <fullName evidence="1">Excinuclease ABC subunit B</fullName>
    </alternativeName>
</protein>